<dbReference type="EC" id="2.7.8.7" evidence="1"/>
<dbReference type="EMBL" id="CP000901">
    <property type="protein sequence ID" value="ABX85363.1"/>
    <property type="molecule type" value="Genomic_DNA"/>
</dbReference>
<dbReference type="RefSeq" id="WP_002211568.1">
    <property type="nucleotide sequence ID" value="NZ_CP009935.1"/>
</dbReference>
<dbReference type="SMR" id="A9R406"/>
<dbReference type="GeneID" id="57975883"/>
<dbReference type="KEGG" id="ypg:YpAngola_A3615"/>
<dbReference type="PATRIC" id="fig|349746.12.peg.315"/>
<dbReference type="GO" id="GO:0005737">
    <property type="term" value="C:cytoplasm"/>
    <property type="evidence" value="ECO:0007669"/>
    <property type="project" value="UniProtKB-SubCell"/>
</dbReference>
<dbReference type="GO" id="GO:0008897">
    <property type="term" value="F:holo-[acyl-carrier-protein] synthase activity"/>
    <property type="evidence" value="ECO:0007669"/>
    <property type="project" value="UniProtKB-UniRule"/>
</dbReference>
<dbReference type="GO" id="GO:0000287">
    <property type="term" value="F:magnesium ion binding"/>
    <property type="evidence" value="ECO:0007669"/>
    <property type="project" value="UniProtKB-UniRule"/>
</dbReference>
<dbReference type="GO" id="GO:0006633">
    <property type="term" value="P:fatty acid biosynthetic process"/>
    <property type="evidence" value="ECO:0007669"/>
    <property type="project" value="UniProtKB-UniRule"/>
</dbReference>
<dbReference type="FunFam" id="3.90.470.20:FF:000001">
    <property type="entry name" value="Holo-[acyl-carrier-protein] synthase"/>
    <property type="match status" value="1"/>
</dbReference>
<dbReference type="Gene3D" id="3.90.470.20">
    <property type="entry name" value="4'-phosphopantetheinyl transferase domain"/>
    <property type="match status" value="1"/>
</dbReference>
<dbReference type="HAMAP" id="MF_00101">
    <property type="entry name" value="AcpS"/>
    <property type="match status" value="1"/>
</dbReference>
<dbReference type="InterPro" id="IPR008278">
    <property type="entry name" value="4-PPantetheinyl_Trfase_dom"/>
</dbReference>
<dbReference type="InterPro" id="IPR037143">
    <property type="entry name" value="4-PPantetheinyl_Trfase_dom_sf"/>
</dbReference>
<dbReference type="InterPro" id="IPR002582">
    <property type="entry name" value="ACPS"/>
</dbReference>
<dbReference type="InterPro" id="IPR004568">
    <property type="entry name" value="Ppantetheine-prot_Trfase_dom"/>
</dbReference>
<dbReference type="NCBIfam" id="TIGR00516">
    <property type="entry name" value="acpS"/>
    <property type="match status" value="1"/>
</dbReference>
<dbReference type="NCBIfam" id="TIGR00556">
    <property type="entry name" value="pantethn_trn"/>
    <property type="match status" value="1"/>
</dbReference>
<dbReference type="Pfam" id="PF01648">
    <property type="entry name" value="ACPS"/>
    <property type="match status" value="1"/>
</dbReference>
<dbReference type="SUPFAM" id="SSF56214">
    <property type="entry name" value="4'-phosphopantetheinyl transferase"/>
    <property type="match status" value="1"/>
</dbReference>
<name>ACPS_YERPG</name>
<feature type="chain" id="PRO_1000093932" description="Holo-[acyl-carrier-protein] synthase">
    <location>
        <begin position="1"/>
        <end position="126"/>
    </location>
</feature>
<feature type="binding site" evidence="1">
    <location>
        <position position="9"/>
    </location>
    <ligand>
        <name>Mg(2+)</name>
        <dbReference type="ChEBI" id="CHEBI:18420"/>
    </ligand>
</feature>
<feature type="binding site" evidence="1">
    <location>
        <position position="58"/>
    </location>
    <ligand>
        <name>Mg(2+)</name>
        <dbReference type="ChEBI" id="CHEBI:18420"/>
    </ligand>
</feature>
<protein>
    <recommendedName>
        <fullName evidence="1">Holo-[acyl-carrier-protein] synthase</fullName>
        <shortName evidence="1">Holo-ACP synthase</shortName>
        <ecNumber evidence="1">2.7.8.7</ecNumber>
    </recommendedName>
    <alternativeName>
        <fullName evidence="1">4'-phosphopantetheinyl transferase AcpS</fullName>
    </alternativeName>
</protein>
<evidence type="ECO:0000255" key="1">
    <source>
        <dbReference type="HAMAP-Rule" id="MF_00101"/>
    </source>
</evidence>
<comment type="function">
    <text evidence="1">Transfers the 4'-phosphopantetheine moiety from coenzyme A to a Ser of acyl-carrier-protein.</text>
</comment>
<comment type="catalytic activity">
    <reaction evidence="1">
        <text>apo-[ACP] + CoA = holo-[ACP] + adenosine 3',5'-bisphosphate + H(+)</text>
        <dbReference type="Rhea" id="RHEA:12068"/>
        <dbReference type="Rhea" id="RHEA-COMP:9685"/>
        <dbReference type="Rhea" id="RHEA-COMP:9690"/>
        <dbReference type="ChEBI" id="CHEBI:15378"/>
        <dbReference type="ChEBI" id="CHEBI:29999"/>
        <dbReference type="ChEBI" id="CHEBI:57287"/>
        <dbReference type="ChEBI" id="CHEBI:58343"/>
        <dbReference type="ChEBI" id="CHEBI:64479"/>
        <dbReference type="EC" id="2.7.8.7"/>
    </reaction>
</comment>
<comment type="cofactor">
    <cofactor evidence="1">
        <name>Mg(2+)</name>
        <dbReference type="ChEBI" id="CHEBI:18420"/>
    </cofactor>
</comment>
<comment type="subcellular location">
    <subcellularLocation>
        <location evidence="1">Cytoplasm</location>
    </subcellularLocation>
</comment>
<comment type="similarity">
    <text evidence="1">Belongs to the P-Pant transferase superfamily. AcpS family.</text>
</comment>
<organism>
    <name type="scientific">Yersinia pestis bv. Antiqua (strain Angola)</name>
    <dbReference type="NCBI Taxonomy" id="349746"/>
    <lineage>
        <taxon>Bacteria</taxon>
        <taxon>Pseudomonadati</taxon>
        <taxon>Pseudomonadota</taxon>
        <taxon>Gammaproteobacteria</taxon>
        <taxon>Enterobacterales</taxon>
        <taxon>Yersiniaceae</taxon>
        <taxon>Yersinia</taxon>
    </lineage>
</organism>
<accession>A9R406</accession>
<gene>
    <name evidence="1" type="primary">acpS</name>
    <name type="ordered locus">YpAngola_A3615</name>
</gene>
<keyword id="KW-0963">Cytoplasm</keyword>
<keyword id="KW-0275">Fatty acid biosynthesis</keyword>
<keyword id="KW-0276">Fatty acid metabolism</keyword>
<keyword id="KW-0444">Lipid biosynthesis</keyword>
<keyword id="KW-0443">Lipid metabolism</keyword>
<keyword id="KW-0460">Magnesium</keyword>
<keyword id="KW-0479">Metal-binding</keyword>
<keyword id="KW-0808">Transferase</keyword>
<sequence length="126" mass="13992">MAILGLGTDIVEISRIQAVVERTGERLARRILSPSEWQHYQQHQQPVRFLAKRFAVKEAAAKAFGTGIRNGLAFNQFEVVNDALGKPTLRLHSRAAELAVELGVKSLHVTLADERRYACATVIIES</sequence>
<reference key="1">
    <citation type="journal article" date="2010" name="J. Bacteriol.">
        <title>Genome sequence of the deep-rooted Yersinia pestis strain Angola reveals new insights into the evolution and pangenome of the plague bacterium.</title>
        <authorList>
            <person name="Eppinger M."/>
            <person name="Worsham P.L."/>
            <person name="Nikolich M.P."/>
            <person name="Riley D.R."/>
            <person name="Sebastian Y."/>
            <person name="Mou S."/>
            <person name="Achtman M."/>
            <person name="Lindler L.E."/>
            <person name="Ravel J."/>
        </authorList>
    </citation>
    <scope>NUCLEOTIDE SEQUENCE [LARGE SCALE GENOMIC DNA]</scope>
    <source>
        <strain>Angola</strain>
    </source>
</reference>
<proteinExistence type="inferred from homology"/>